<gene>
    <name type="primary">queC</name>
    <name type="ordered locus">SSO0016</name>
</gene>
<proteinExistence type="inferred from homology"/>
<accession>Q981C9</accession>
<comment type="function">
    <text evidence="1">Catalyzes the ATP-dependent conversion of 7-carboxy-7-deazaguanine (CDG) to 7-cyano-7-deazaguanine (preQ(0)).</text>
</comment>
<comment type="catalytic activity">
    <reaction>
        <text>7-carboxy-7-deazaguanine + NH4(+) + ATP = 7-cyano-7-deazaguanine + ADP + phosphate + H2O + H(+)</text>
        <dbReference type="Rhea" id="RHEA:27982"/>
        <dbReference type="ChEBI" id="CHEBI:15377"/>
        <dbReference type="ChEBI" id="CHEBI:15378"/>
        <dbReference type="ChEBI" id="CHEBI:28938"/>
        <dbReference type="ChEBI" id="CHEBI:30616"/>
        <dbReference type="ChEBI" id="CHEBI:43474"/>
        <dbReference type="ChEBI" id="CHEBI:45075"/>
        <dbReference type="ChEBI" id="CHEBI:61036"/>
        <dbReference type="ChEBI" id="CHEBI:456216"/>
        <dbReference type="EC" id="6.3.4.20"/>
    </reaction>
</comment>
<comment type="cofactor">
    <cofactor evidence="1">
        <name>Zn(2+)</name>
        <dbReference type="ChEBI" id="CHEBI:29105"/>
    </cofactor>
    <text evidence="1">Binds 1 zinc ion per subunit.</text>
</comment>
<comment type="pathway">
    <text>Purine metabolism; 7-cyano-7-deazaguanine biosynthesis.</text>
</comment>
<comment type="similarity">
    <text evidence="2">Belongs to the QueC family.</text>
</comment>
<evidence type="ECO:0000250" key="1"/>
<evidence type="ECO:0000305" key="2"/>
<organism>
    <name type="scientific">Saccharolobus solfataricus (strain ATCC 35092 / DSM 1617 / JCM 11322 / P2)</name>
    <name type="common">Sulfolobus solfataricus</name>
    <dbReference type="NCBI Taxonomy" id="273057"/>
    <lineage>
        <taxon>Archaea</taxon>
        <taxon>Thermoproteota</taxon>
        <taxon>Thermoprotei</taxon>
        <taxon>Sulfolobales</taxon>
        <taxon>Sulfolobaceae</taxon>
        <taxon>Saccharolobus</taxon>
    </lineage>
</organism>
<reference key="1">
    <citation type="journal article" date="2001" name="Proc. Natl. Acad. Sci. U.S.A.">
        <title>The complete genome of the crenarchaeon Sulfolobus solfataricus P2.</title>
        <authorList>
            <person name="She Q."/>
            <person name="Singh R.K."/>
            <person name="Confalonieri F."/>
            <person name="Zivanovic Y."/>
            <person name="Allard G."/>
            <person name="Awayez M.J."/>
            <person name="Chan-Weiher C.C.-Y."/>
            <person name="Clausen I.G."/>
            <person name="Curtis B.A."/>
            <person name="De Moors A."/>
            <person name="Erauso G."/>
            <person name="Fletcher C."/>
            <person name="Gordon P.M.K."/>
            <person name="Heikamp-de Jong I."/>
            <person name="Jeffries A.C."/>
            <person name="Kozera C.J."/>
            <person name="Medina N."/>
            <person name="Peng X."/>
            <person name="Thi-Ngoc H.P."/>
            <person name="Redder P."/>
            <person name="Schenk M.E."/>
            <person name="Theriault C."/>
            <person name="Tolstrup N."/>
            <person name="Charlebois R.L."/>
            <person name="Doolittle W.F."/>
            <person name="Duguet M."/>
            <person name="Gaasterland T."/>
            <person name="Garrett R.A."/>
            <person name="Ragan M.A."/>
            <person name="Sensen C.W."/>
            <person name="Van der Oost J."/>
        </authorList>
    </citation>
    <scope>NUCLEOTIDE SEQUENCE [LARGE SCALE GENOMIC DNA]</scope>
    <source>
        <strain>ATCC 35092 / DSM 1617 / JCM 11322 / P2</strain>
    </source>
</reference>
<name>QUEC_SACS2</name>
<dbReference type="EC" id="6.3.4.20"/>
<dbReference type="EMBL" id="AE006641">
    <property type="protein sequence ID" value="AAK40383.1"/>
    <property type="molecule type" value="Genomic_DNA"/>
</dbReference>
<dbReference type="PIR" id="H90140">
    <property type="entry name" value="H90140"/>
</dbReference>
<dbReference type="RefSeq" id="WP_009989631.1">
    <property type="nucleotide sequence ID" value="NC_002754.1"/>
</dbReference>
<dbReference type="SMR" id="Q981C9"/>
<dbReference type="STRING" id="273057.SSO0016"/>
<dbReference type="PaxDb" id="273057-SSO0016"/>
<dbReference type="DNASU" id="1455274"/>
<dbReference type="EnsemblBacteria" id="AAK40383">
    <property type="protein sequence ID" value="AAK40383"/>
    <property type="gene ID" value="SSO0016"/>
</dbReference>
<dbReference type="GeneID" id="44128978"/>
<dbReference type="KEGG" id="sso:SSO0016"/>
<dbReference type="PATRIC" id="fig|273057.12.peg.17"/>
<dbReference type="eggNOG" id="arCOG00039">
    <property type="taxonomic scope" value="Archaea"/>
</dbReference>
<dbReference type="HOGENOM" id="CLU_550565_0_0_2"/>
<dbReference type="InParanoid" id="Q981C9"/>
<dbReference type="BRENDA" id="2.6.1.97">
    <property type="organism ID" value="6163"/>
</dbReference>
<dbReference type="UniPathway" id="UPA00391"/>
<dbReference type="Proteomes" id="UP000001974">
    <property type="component" value="Chromosome"/>
</dbReference>
<dbReference type="GO" id="GO:0005524">
    <property type="term" value="F:ATP binding"/>
    <property type="evidence" value="ECO:0007669"/>
    <property type="project" value="UniProtKB-UniRule"/>
</dbReference>
<dbReference type="GO" id="GO:0016879">
    <property type="term" value="F:ligase activity, forming carbon-nitrogen bonds"/>
    <property type="evidence" value="ECO:0007669"/>
    <property type="project" value="UniProtKB-UniRule"/>
</dbReference>
<dbReference type="GO" id="GO:0008270">
    <property type="term" value="F:zinc ion binding"/>
    <property type="evidence" value="ECO:0007669"/>
    <property type="project" value="UniProtKB-UniRule"/>
</dbReference>
<dbReference type="CDD" id="cd00352">
    <property type="entry name" value="Gn_AT_II"/>
    <property type="match status" value="1"/>
</dbReference>
<dbReference type="CDD" id="cd01995">
    <property type="entry name" value="QueC-like"/>
    <property type="match status" value="1"/>
</dbReference>
<dbReference type="Gene3D" id="3.60.20.10">
    <property type="entry name" value="Glutamine Phosphoribosylpyrophosphate, subunit 1, domain 1"/>
    <property type="match status" value="1"/>
</dbReference>
<dbReference type="Gene3D" id="3.40.50.620">
    <property type="entry name" value="HUPs"/>
    <property type="match status" value="1"/>
</dbReference>
<dbReference type="HAMAP" id="MF_01633">
    <property type="entry name" value="QueC"/>
    <property type="match status" value="1"/>
</dbReference>
<dbReference type="InterPro" id="IPR017932">
    <property type="entry name" value="GATase_2_dom"/>
</dbReference>
<dbReference type="InterPro" id="IPR029055">
    <property type="entry name" value="Ntn_hydrolases_N"/>
</dbReference>
<dbReference type="InterPro" id="IPR018317">
    <property type="entry name" value="QueC"/>
</dbReference>
<dbReference type="InterPro" id="IPR014729">
    <property type="entry name" value="Rossmann-like_a/b/a_fold"/>
</dbReference>
<dbReference type="NCBIfam" id="TIGR00364">
    <property type="entry name" value="7-cyano-7-deazaguanine synthase QueC"/>
    <property type="match status" value="1"/>
</dbReference>
<dbReference type="PANTHER" id="PTHR42914">
    <property type="entry name" value="7-CYANO-7-DEAZAGUANINE SYNTHASE"/>
    <property type="match status" value="1"/>
</dbReference>
<dbReference type="PANTHER" id="PTHR42914:SF1">
    <property type="entry name" value="7-CYANO-7-DEAZAGUANINE SYNTHASE"/>
    <property type="match status" value="1"/>
</dbReference>
<dbReference type="Pfam" id="PF13537">
    <property type="entry name" value="GATase_7"/>
    <property type="match status" value="1"/>
</dbReference>
<dbReference type="Pfam" id="PF06508">
    <property type="entry name" value="QueC"/>
    <property type="match status" value="1"/>
</dbReference>
<dbReference type="SUPFAM" id="SSF52402">
    <property type="entry name" value="Adenine nucleotide alpha hydrolases-like"/>
    <property type="match status" value="1"/>
</dbReference>
<dbReference type="SUPFAM" id="SSF56235">
    <property type="entry name" value="N-terminal nucleophile aminohydrolases (Ntn hydrolases)"/>
    <property type="match status" value="1"/>
</dbReference>
<dbReference type="PROSITE" id="PS51278">
    <property type="entry name" value="GATASE_TYPE_2"/>
    <property type="match status" value="1"/>
</dbReference>
<protein>
    <recommendedName>
        <fullName>7-cyano-7-deazaguanine synthase</fullName>
        <ecNumber>6.3.4.20</ecNumber>
    </recommendedName>
    <alternativeName>
        <fullName>7-cyano-7-carbaguanine synthase</fullName>
    </alternativeName>
    <alternativeName>
        <fullName>Archaeosine biosynthesis protein QueC</fullName>
    </alternativeName>
    <alternativeName>
        <fullName>PreQ(0) synthase</fullName>
    </alternativeName>
</protein>
<feature type="initiator methionine" description="Removed" evidence="1">
    <location>
        <position position="1"/>
    </location>
</feature>
<feature type="chain" id="PRO_0000246990" description="7-cyano-7-deazaguanine synthase">
    <location>
        <begin position="2"/>
        <end position="464"/>
    </location>
</feature>
<feature type="domain" description="Glutamine amidotransferase type-2">
    <location>
        <begin position="2"/>
        <end position="227"/>
    </location>
</feature>
<feature type="active site" description="For GATase activity" evidence="1">
    <location>
        <position position="2"/>
    </location>
</feature>
<feature type="binding site" evidence="1">
    <location>
        <begin position="248"/>
        <end position="258"/>
    </location>
    <ligand>
        <name>ATP</name>
        <dbReference type="ChEBI" id="CHEBI:30616"/>
    </ligand>
</feature>
<feature type="binding site" evidence="1">
    <location>
        <position position="429"/>
    </location>
    <ligand>
        <name>Zn(2+)</name>
        <dbReference type="ChEBI" id="CHEBI:29105"/>
    </ligand>
</feature>
<feature type="binding site" evidence="1">
    <location>
        <position position="437"/>
    </location>
    <ligand>
        <name>Zn(2+)</name>
        <dbReference type="ChEBI" id="CHEBI:29105"/>
    </ligand>
</feature>
<feature type="binding site" evidence="1">
    <location>
        <position position="440"/>
    </location>
    <ligand>
        <name>Zn(2+)</name>
        <dbReference type="ChEBI" id="CHEBI:29105"/>
    </ligand>
</feature>
<feature type="binding site" evidence="1">
    <location>
        <position position="443"/>
    </location>
    <ligand>
        <name>Zn(2+)</name>
        <dbReference type="ChEBI" id="CHEBI:29105"/>
    </ligand>
</feature>
<sequence>MCSVSGVLILNPKNFEKVELKLASILKKAEDRGRDSFGIVVIQKDGTVKVRKSIGKPSEKEELLYGILDEDSRVVIANNRAEPTTEYVRQKTEDDIQPFIGDRYIVTHNGIIANDLELEKKYELKRKTKIDSAILPLLLDKTWDGNLEALKGILEQIKGSFALVIGDKKNPDRIFLAQNFKPLYMAYDHSLESLFFTSLDEYFDAKPFDPVNITKLEPYSVVMVTSNKLITTLPIMEKRKKYRVLVVASGGLDSTVAATKLLREGHEVTLIHFNYHHKAEEKEREAVRKIAEYLQIPLLEINTDLFKIIGHATLIKGGGEIVKDRKGEEGAEFAHEWVPARNLIFFSVSLAIAEAYGYDAIASGINLEEAGAYPDNEMEFIRMLNKLSPYATGPNKRIEILMPVGNLVKHEIVKLGYEIGAPLHLTWSCYEGGQKHCGKCGPCYMRKMAFRINGLKDPVEYDEE</sequence>
<keyword id="KW-0067">ATP-binding</keyword>
<keyword id="KW-0315">Glutamine amidotransferase</keyword>
<keyword id="KW-0436">Ligase</keyword>
<keyword id="KW-0479">Metal-binding</keyword>
<keyword id="KW-0547">Nucleotide-binding</keyword>
<keyword id="KW-1185">Reference proteome</keyword>
<keyword id="KW-0862">Zinc</keyword>